<organism>
    <name type="scientific">Aquifex aeolicus (strain VF5)</name>
    <dbReference type="NCBI Taxonomy" id="224324"/>
    <lineage>
        <taxon>Bacteria</taxon>
        <taxon>Pseudomonadati</taxon>
        <taxon>Aquificota</taxon>
        <taxon>Aquificia</taxon>
        <taxon>Aquificales</taxon>
        <taxon>Aquificaceae</taxon>
        <taxon>Aquifex</taxon>
    </lineage>
</organism>
<reference key="1">
    <citation type="journal article" date="1998" name="Nature">
        <title>The complete genome of the hyperthermophilic bacterium Aquifex aeolicus.</title>
        <authorList>
            <person name="Deckert G."/>
            <person name="Warren P.V."/>
            <person name="Gaasterland T."/>
            <person name="Young W.G."/>
            <person name="Lenox A.L."/>
            <person name="Graham D.E."/>
            <person name="Overbeek R."/>
            <person name="Snead M.A."/>
            <person name="Keller M."/>
            <person name="Aujay M."/>
            <person name="Huber R."/>
            <person name="Feldman R.A."/>
            <person name="Short J.M."/>
            <person name="Olsen G.J."/>
            <person name="Swanson R.V."/>
        </authorList>
    </citation>
    <scope>NUCLEOTIDE SEQUENCE [LARGE SCALE GENOMIC DNA]</scope>
    <source>
        <strain>VF5</strain>
    </source>
</reference>
<name>Y1446_AQUAE</name>
<gene>
    <name type="ordered locus">aq_1446</name>
</gene>
<comment type="subcellular location">
    <subcellularLocation>
        <location evidence="2">Cell membrane</location>
        <topology evidence="2">Multi-pass membrane protein</topology>
    </subcellularLocation>
</comment>
<comment type="similarity">
    <text evidence="2">To A.aeolicus aq_1900.</text>
</comment>
<keyword id="KW-1003">Cell membrane</keyword>
<keyword id="KW-0472">Membrane</keyword>
<keyword id="KW-1185">Reference proteome</keyword>
<keyword id="KW-0812">Transmembrane</keyword>
<keyword id="KW-1133">Transmembrane helix</keyword>
<dbReference type="EMBL" id="AE000657">
    <property type="protein sequence ID" value="AAC07402.1"/>
    <property type="molecule type" value="Genomic_DNA"/>
</dbReference>
<dbReference type="PIR" id="G70425">
    <property type="entry name" value="G70425"/>
</dbReference>
<dbReference type="RefSeq" id="NP_213998.1">
    <property type="nucleotide sequence ID" value="NC_000918.1"/>
</dbReference>
<dbReference type="STRING" id="224324.aq_1446"/>
<dbReference type="EnsemblBacteria" id="AAC07402">
    <property type="protein sequence ID" value="AAC07402"/>
    <property type="gene ID" value="aq_1446"/>
</dbReference>
<dbReference type="KEGG" id="aae:aq_1446"/>
<dbReference type="PATRIC" id="fig|224324.8.peg.1128"/>
<dbReference type="eggNOG" id="ENOG5032W39">
    <property type="taxonomic scope" value="Bacteria"/>
</dbReference>
<dbReference type="HOGENOM" id="CLU_1583165_0_0_0"/>
<dbReference type="InParanoid" id="O67433"/>
<dbReference type="OrthoDB" id="965621at2"/>
<dbReference type="Proteomes" id="UP000000798">
    <property type="component" value="Chromosome"/>
</dbReference>
<dbReference type="GO" id="GO:0005886">
    <property type="term" value="C:plasma membrane"/>
    <property type="evidence" value="ECO:0007669"/>
    <property type="project" value="UniProtKB-SubCell"/>
</dbReference>
<dbReference type="Gene3D" id="3.90.20.10">
    <property type="match status" value="1"/>
</dbReference>
<feature type="chain" id="PRO_0000186927" description="Uncharacterized protein aq_1446">
    <location>
        <begin position="1"/>
        <end position="185"/>
    </location>
</feature>
<feature type="transmembrane region" description="Helical" evidence="1">
    <location>
        <begin position="1"/>
        <end position="21"/>
    </location>
</feature>
<feature type="transmembrane region" description="Helical" evidence="1">
    <location>
        <begin position="111"/>
        <end position="131"/>
    </location>
</feature>
<accession>O67433</accession>
<proteinExistence type="predicted"/>
<evidence type="ECO:0000255" key="1"/>
<evidence type="ECO:0000305" key="2"/>
<sequence>MMKFLLILIFLASFSFSLTPEEEKQLLKDIAEIKTTLKAFIREADERFEQVDKRFEDVNRRFEDFNRRLNDLREDMNKRFELVDKRFIELREDMNKRFELVDQRFEQLYTFLWIITGIFTTLTASVIAFAWWDRRTIIRKTKEETFEEMEKELKPEKFRKIMNALREKAKTDKELEAILKKYGLL</sequence>
<protein>
    <recommendedName>
        <fullName>Uncharacterized protein aq_1446</fullName>
    </recommendedName>
</protein>